<proteinExistence type="inferred from homology"/>
<comment type="function">
    <text>Catalyzes the radical-mediated synthesis of 5-amino-5-(4-hydroxybenzyl)-6-(D-ribitylimino)-5,6-dihydrouracil from 5-amino-6-(D-ribitylamino)uracil and L-tyrosine.</text>
</comment>
<comment type="catalytic activity">
    <reaction>
        <text>5-amino-6-(D-ribitylamino)uracil + L-tyrosine + S-adenosyl-L-methionine = 5-amino-5-(4-hydroxybenzyl)-6-(D-ribitylimino)-5,6-dihydrouracil + 2-iminoacetate + 5'-deoxyadenosine + L-methionine + H(+)</text>
        <dbReference type="Rhea" id="RHEA:55200"/>
        <dbReference type="ChEBI" id="CHEBI:15378"/>
        <dbReference type="ChEBI" id="CHEBI:15934"/>
        <dbReference type="ChEBI" id="CHEBI:17319"/>
        <dbReference type="ChEBI" id="CHEBI:57844"/>
        <dbReference type="ChEBI" id="CHEBI:58315"/>
        <dbReference type="ChEBI" id="CHEBI:59789"/>
        <dbReference type="ChEBI" id="CHEBI:77846"/>
        <dbReference type="ChEBI" id="CHEBI:85936"/>
        <dbReference type="EC" id="2.5.1.147"/>
    </reaction>
</comment>
<comment type="cofactor">
    <cofactor evidence="1">
        <name>[4Fe-4S] cluster</name>
        <dbReference type="ChEBI" id="CHEBI:49883"/>
    </cofactor>
    <text evidence="1">Binds 1 [4Fe-4S] cluster. The cluster is coordinated with 3 cysteines and an exchangeable S-adenosyl-L-methionine.</text>
</comment>
<comment type="pathway">
    <text>Cofactor biosynthesis; coenzyme F0 biosynthesis.</text>
</comment>
<comment type="subunit">
    <text evidence="1">Consists of two subunits, CofG and CofH.</text>
</comment>
<comment type="similarity">
    <text evidence="4">Belongs to the radical SAM superfamily. CofH family.</text>
</comment>
<comment type="sequence caution" evidence="4">
    <conflict type="erroneous initiation">
        <sequence resource="EMBL-CDS" id="AAG20122"/>
    </conflict>
</comment>
<reference key="1">
    <citation type="journal article" date="2000" name="Proc. Natl. Acad. Sci. U.S.A.">
        <title>Genome sequence of Halobacterium species NRC-1.</title>
        <authorList>
            <person name="Ng W.V."/>
            <person name="Kennedy S.P."/>
            <person name="Mahairas G.G."/>
            <person name="Berquist B."/>
            <person name="Pan M."/>
            <person name="Shukla H.D."/>
            <person name="Lasky S.R."/>
            <person name="Baliga N.S."/>
            <person name="Thorsson V."/>
            <person name="Sbrogna J."/>
            <person name="Swartzell S."/>
            <person name="Weir D."/>
            <person name="Hall J."/>
            <person name="Dahl T.A."/>
            <person name="Welti R."/>
            <person name="Goo Y.A."/>
            <person name="Leithauser B."/>
            <person name="Keller K."/>
            <person name="Cruz R."/>
            <person name="Danson M.J."/>
            <person name="Hough D.W."/>
            <person name="Maddocks D.G."/>
            <person name="Jablonski P.E."/>
            <person name="Krebs M.P."/>
            <person name="Angevine C.M."/>
            <person name="Dale H."/>
            <person name="Isenbarger T.A."/>
            <person name="Peck R.F."/>
            <person name="Pohlschroder M."/>
            <person name="Spudich J.L."/>
            <person name="Jung K.-H."/>
            <person name="Alam M."/>
            <person name="Freitas T."/>
            <person name="Hou S."/>
            <person name="Daniels C.J."/>
            <person name="Dennis P.P."/>
            <person name="Omer A.D."/>
            <person name="Ebhardt H."/>
            <person name="Lowe T.M."/>
            <person name="Liang P."/>
            <person name="Riley M."/>
            <person name="Hood L."/>
            <person name="DasSarma S."/>
        </authorList>
    </citation>
    <scope>NUCLEOTIDE SEQUENCE [LARGE SCALE GENOMIC DNA]</scope>
    <source>
        <strain>ATCC 700922 / JCM 11081 / NRC-1</strain>
    </source>
</reference>
<protein>
    <recommendedName>
        <fullName>5-amino-6-(D-ribitylamino)uracil--L-tyrosine 4-hydroxyphenyl transferase</fullName>
        <ecNumber>2.5.1.147</ecNumber>
    </recommendedName>
    <alternativeName>
        <fullName>FO synthase subunit 2</fullName>
    </alternativeName>
</protein>
<evidence type="ECO:0000250" key="1"/>
<evidence type="ECO:0000255" key="2">
    <source>
        <dbReference type="PROSITE-ProRule" id="PRU01266"/>
    </source>
</evidence>
<evidence type="ECO:0000256" key="3">
    <source>
        <dbReference type="SAM" id="MobiDB-lite"/>
    </source>
</evidence>
<evidence type="ECO:0000305" key="4"/>
<gene>
    <name type="primary">cofH</name>
    <name type="ordered locus">VNG_1938C</name>
</gene>
<dbReference type="EC" id="2.5.1.147"/>
<dbReference type="EMBL" id="AE004437">
    <property type="protein sequence ID" value="AAG20122.1"/>
    <property type="status" value="ALT_INIT"/>
    <property type="molecule type" value="Genomic_DNA"/>
</dbReference>
<dbReference type="PIR" id="F84344">
    <property type="entry name" value="F84344"/>
</dbReference>
<dbReference type="RefSeq" id="WP_010903422.1">
    <property type="nucleotide sequence ID" value="NC_002607.1"/>
</dbReference>
<dbReference type="SMR" id="Q9HNU8"/>
<dbReference type="FunCoup" id="Q9HNU8">
    <property type="interactions" value="67"/>
</dbReference>
<dbReference type="STRING" id="64091.VNG_1938C"/>
<dbReference type="PaxDb" id="64091-VNG_1938C"/>
<dbReference type="GeneID" id="68694546"/>
<dbReference type="KEGG" id="hal:VNG_1938C"/>
<dbReference type="PATRIC" id="fig|64091.14.peg.1481"/>
<dbReference type="HOGENOM" id="CLU_040406_1_1_2"/>
<dbReference type="InParanoid" id="Q9HNU8"/>
<dbReference type="OrthoDB" id="8186at2157"/>
<dbReference type="UniPathway" id="UPA00072"/>
<dbReference type="Proteomes" id="UP000000554">
    <property type="component" value="Chromosome"/>
</dbReference>
<dbReference type="GO" id="GO:0051539">
    <property type="term" value="F:4 iron, 4 sulfur cluster binding"/>
    <property type="evidence" value="ECO:0007669"/>
    <property type="project" value="UniProtKB-KW"/>
</dbReference>
<dbReference type="GO" id="GO:0141093">
    <property type="term" value="F:5-amino-6-(D-ribitylamino)uracil--L-tyrosine 4-hydroxyphenyl transferase activity"/>
    <property type="evidence" value="ECO:0007669"/>
    <property type="project" value="UniProtKB-EC"/>
</dbReference>
<dbReference type="GO" id="GO:0044689">
    <property type="term" value="F:7,8-didemethyl-8-hydroxy-5-deazariboflavin synthase activity"/>
    <property type="evidence" value="ECO:0000318"/>
    <property type="project" value="GO_Central"/>
</dbReference>
<dbReference type="GO" id="GO:0046872">
    <property type="term" value="F:metal ion binding"/>
    <property type="evidence" value="ECO:0007669"/>
    <property type="project" value="UniProtKB-KW"/>
</dbReference>
<dbReference type="Gene3D" id="3.20.20.70">
    <property type="entry name" value="Aldolase class I"/>
    <property type="match status" value="1"/>
</dbReference>
<dbReference type="InterPro" id="IPR013785">
    <property type="entry name" value="Aldolase_TIM"/>
</dbReference>
<dbReference type="InterPro" id="IPR045567">
    <property type="entry name" value="CofH/MnqC-like_C"/>
</dbReference>
<dbReference type="InterPro" id="IPR006638">
    <property type="entry name" value="Elp3/MiaA/NifB-like_rSAM"/>
</dbReference>
<dbReference type="InterPro" id="IPR034405">
    <property type="entry name" value="F420"/>
</dbReference>
<dbReference type="InterPro" id="IPR007197">
    <property type="entry name" value="rSAM"/>
</dbReference>
<dbReference type="NCBIfam" id="NF005609">
    <property type="entry name" value="PRK07360.1"/>
    <property type="match status" value="1"/>
</dbReference>
<dbReference type="PANTHER" id="PTHR43076">
    <property type="entry name" value="FO SYNTHASE (COFH)"/>
    <property type="match status" value="1"/>
</dbReference>
<dbReference type="PANTHER" id="PTHR43076:SF1">
    <property type="entry name" value="LIPOYL SYNTHASE 2"/>
    <property type="match status" value="1"/>
</dbReference>
<dbReference type="Pfam" id="PF19288">
    <property type="entry name" value="CofH_C"/>
    <property type="match status" value="1"/>
</dbReference>
<dbReference type="Pfam" id="PF04055">
    <property type="entry name" value="Radical_SAM"/>
    <property type="match status" value="1"/>
</dbReference>
<dbReference type="SFLD" id="SFLDG01388">
    <property type="entry name" value="7_8-didemethyl-8-hydroxy-5-dea"/>
    <property type="match status" value="1"/>
</dbReference>
<dbReference type="SFLD" id="SFLDG01064">
    <property type="entry name" value="F420__menaquinone_cofactor_bio"/>
    <property type="match status" value="1"/>
</dbReference>
<dbReference type="SMART" id="SM00729">
    <property type="entry name" value="Elp3"/>
    <property type="match status" value="1"/>
</dbReference>
<dbReference type="SUPFAM" id="SSF102114">
    <property type="entry name" value="Radical SAM enzymes"/>
    <property type="match status" value="1"/>
</dbReference>
<dbReference type="PROSITE" id="PS51918">
    <property type="entry name" value="RADICAL_SAM"/>
    <property type="match status" value="1"/>
</dbReference>
<sequence>MTDASALDFDVVPSTDQSFENALANARDGRRLTVADGIELITTGTDTDGIDPRRKELVLEAADRRRADVVGDDVTFVANLNNNVTTACNTGCLFCNFKDTAHRFETEHEAAHGGFTKTPAESKATVADAIQRGVSEVTSVSGLHPAFGLNEAHRDALDPDDPDHNYKPPEAYDTDPTTYAAQIAAMSEAGAHVHSITPEEAHHAQRGVSWGYDEVYETLADAGLDTVPGTAAEILVDEVRDVICPGKMTTDEWVAAMEAAADAGLGTTATIMYGHVENAAHRIHHLDVIRALQDRTHNITEFVPLSFIHEQTPLYERGVVDGGASDAEDELMIAVSRLFLDNIDHIQSSWVKFGDAKGLALLNCGADDFMGTILSEEITKRAGGQHGEFRSVADYAEMISAIGRTPVERSTDYTTRHVINPDADTIGPHVGPNADGTPLVSERAGTPPHSAGD</sequence>
<keyword id="KW-0004">4Fe-4S</keyword>
<keyword id="KW-0408">Iron</keyword>
<keyword id="KW-0411">Iron-sulfur</keyword>
<keyword id="KW-0479">Metal-binding</keyword>
<keyword id="KW-1185">Reference proteome</keyword>
<keyword id="KW-0949">S-adenosyl-L-methionine</keyword>
<keyword id="KW-0808">Transferase</keyword>
<feature type="chain" id="PRO_0000141715" description="5-amino-6-(D-ribitylamino)uracil--L-tyrosine 4-hydroxyphenyl transferase">
    <location>
        <begin position="1"/>
        <end position="453"/>
    </location>
</feature>
<feature type="domain" description="Radical SAM core" evidence="2">
    <location>
        <begin position="74"/>
        <end position="344"/>
    </location>
</feature>
<feature type="region of interest" description="Disordered" evidence="3">
    <location>
        <begin position="418"/>
        <end position="453"/>
    </location>
</feature>
<feature type="binding site" evidence="1">
    <location>
        <position position="88"/>
    </location>
    <ligand>
        <name>[4Fe-4S] cluster</name>
        <dbReference type="ChEBI" id="CHEBI:49883"/>
        <note>4Fe-4S-S-AdoMet</note>
    </ligand>
</feature>
<feature type="binding site" evidence="1">
    <location>
        <position position="92"/>
    </location>
    <ligand>
        <name>[4Fe-4S] cluster</name>
        <dbReference type="ChEBI" id="CHEBI:49883"/>
        <note>4Fe-4S-S-AdoMet</note>
    </ligand>
</feature>
<feature type="binding site" evidence="1">
    <location>
        <position position="95"/>
    </location>
    <ligand>
        <name>[4Fe-4S] cluster</name>
        <dbReference type="ChEBI" id="CHEBI:49883"/>
        <note>4Fe-4S-S-AdoMet</note>
    </ligand>
</feature>
<name>COFH_HALSA</name>
<organism>
    <name type="scientific">Halobacterium salinarum (strain ATCC 700922 / JCM 11081 / NRC-1)</name>
    <name type="common">Halobacterium halobium</name>
    <dbReference type="NCBI Taxonomy" id="64091"/>
    <lineage>
        <taxon>Archaea</taxon>
        <taxon>Methanobacteriati</taxon>
        <taxon>Methanobacteriota</taxon>
        <taxon>Stenosarchaea group</taxon>
        <taxon>Halobacteria</taxon>
        <taxon>Halobacteriales</taxon>
        <taxon>Halobacteriaceae</taxon>
        <taxon>Halobacterium</taxon>
        <taxon>Halobacterium salinarum NRC-34001</taxon>
    </lineage>
</organism>
<accession>Q9HNU8</accession>